<name>LOLA_YERPB</name>
<reference key="1">
    <citation type="submission" date="2008-04" db="EMBL/GenBank/DDBJ databases">
        <title>Complete sequence of Yersinia pseudotuberculosis PB1/+.</title>
        <authorList>
            <person name="Copeland A."/>
            <person name="Lucas S."/>
            <person name="Lapidus A."/>
            <person name="Glavina del Rio T."/>
            <person name="Dalin E."/>
            <person name="Tice H."/>
            <person name="Bruce D."/>
            <person name="Goodwin L."/>
            <person name="Pitluck S."/>
            <person name="Munk A.C."/>
            <person name="Brettin T."/>
            <person name="Detter J.C."/>
            <person name="Han C."/>
            <person name="Tapia R."/>
            <person name="Schmutz J."/>
            <person name="Larimer F."/>
            <person name="Land M."/>
            <person name="Hauser L."/>
            <person name="Challacombe J.F."/>
            <person name="Green L."/>
            <person name="Lindler L.E."/>
            <person name="Nikolich M.P."/>
            <person name="Richardson P."/>
        </authorList>
    </citation>
    <scope>NUCLEOTIDE SEQUENCE [LARGE SCALE GENOMIC DNA]</scope>
    <source>
        <strain>PB1/+</strain>
    </source>
</reference>
<protein>
    <recommendedName>
        <fullName evidence="1">Outer-membrane lipoprotein carrier protein</fullName>
    </recommendedName>
</protein>
<dbReference type="EMBL" id="CP001048">
    <property type="protein sequence ID" value="ACC88474.1"/>
    <property type="molecule type" value="Genomic_DNA"/>
</dbReference>
<dbReference type="RefSeq" id="WP_002211338.1">
    <property type="nucleotide sequence ID" value="NZ_CP009780.1"/>
</dbReference>
<dbReference type="SMR" id="B2KA09"/>
<dbReference type="GeneID" id="57977173"/>
<dbReference type="KEGG" id="ypb:YPTS_1502"/>
<dbReference type="PATRIC" id="fig|502801.10.peg.867"/>
<dbReference type="GO" id="GO:0030288">
    <property type="term" value="C:outer membrane-bounded periplasmic space"/>
    <property type="evidence" value="ECO:0007669"/>
    <property type="project" value="TreeGrafter"/>
</dbReference>
<dbReference type="GO" id="GO:0044874">
    <property type="term" value="P:lipoprotein localization to outer membrane"/>
    <property type="evidence" value="ECO:0007669"/>
    <property type="project" value="UniProtKB-UniRule"/>
</dbReference>
<dbReference type="GO" id="GO:0042953">
    <property type="term" value="P:lipoprotein transport"/>
    <property type="evidence" value="ECO:0007669"/>
    <property type="project" value="InterPro"/>
</dbReference>
<dbReference type="CDD" id="cd16325">
    <property type="entry name" value="LolA"/>
    <property type="match status" value="1"/>
</dbReference>
<dbReference type="FunFam" id="2.50.20.10:FF:000001">
    <property type="entry name" value="Outer-membrane lipoprotein carrier protein"/>
    <property type="match status" value="1"/>
</dbReference>
<dbReference type="Gene3D" id="2.50.20.10">
    <property type="entry name" value="Lipoprotein localisation LolA/LolB/LppX"/>
    <property type="match status" value="1"/>
</dbReference>
<dbReference type="HAMAP" id="MF_00240">
    <property type="entry name" value="LolA"/>
    <property type="match status" value="1"/>
</dbReference>
<dbReference type="InterPro" id="IPR029046">
    <property type="entry name" value="LolA/LolB/LppX"/>
</dbReference>
<dbReference type="InterPro" id="IPR004564">
    <property type="entry name" value="OM_lipoprot_carrier_LolA-like"/>
</dbReference>
<dbReference type="InterPro" id="IPR018323">
    <property type="entry name" value="OM_lipoprot_carrier_LolA_Pbac"/>
</dbReference>
<dbReference type="NCBIfam" id="TIGR00547">
    <property type="entry name" value="lolA"/>
    <property type="match status" value="1"/>
</dbReference>
<dbReference type="PANTHER" id="PTHR35869">
    <property type="entry name" value="OUTER-MEMBRANE LIPOPROTEIN CARRIER PROTEIN"/>
    <property type="match status" value="1"/>
</dbReference>
<dbReference type="PANTHER" id="PTHR35869:SF1">
    <property type="entry name" value="OUTER-MEMBRANE LIPOPROTEIN CARRIER PROTEIN"/>
    <property type="match status" value="1"/>
</dbReference>
<dbReference type="Pfam" id="PF03548">
    <property type="entry name" value="LolA"/>
    <property type="match status" value="1"/>
</dbReference>
<dbReference type="SUPFAM" id="SSF89392">
    <property type="entry name" value="Prokaryotic lipoproteins and lipoprotein localization factors"/>
    <property type="match status" value="1"/>
</dbReference>
<proteinExistence type="inferred from homology"/>
<comment type="function">
    <text evidence="1">Participates in the translocation of lipoproteins from the inner membrane to the outer membrane. Only forms a complex with a lipoprotein if the residue after the N-terminal Cys is not an aspartate (The Asp acts as a targeting signal to indicate that the lipoprotein should stay in the inner membrane).</text>
</comment>
<comment type="subunit">
    <text evidence="1">Monomer.</text>
</comment>
<comment type="subcellular location">
    <subcellularLocation>
        <location evidence="1">Periplasm</location>
    </subcellularLocation>
</comment>
<comment type="similarity">
    <text evidence="1">Belongs to the LolA family.</text>
</comment>
<accession>B2KA09</accession>
<evidence type="ECO:0000255" key="1">
    <source>
        <dbReference type="HAMAP-Rule" id="MF_00240"/>
    </source>
</evidence>
<feature type="signal peptide" evidence="1">
    <location>
        <begin position="1"/>
        <end position="21"/>
    </location>
</feature>
<feature type="chain" id="PRO_5000345982" description="Outer-membrane lipoprotein carrier protein">
    <location>
        <begin position="22"/>
        <end position="202"/>
    </location>
</feature>
<gene>
    <name evidence="1" type="primary">lolA</name>
    <name type="ordered locus">YPTS_1502</name>
</gene>
<organism>
    <name type="scientific">Yersinia pseudotuberculosis serotype IB (strain PB1/+)</name>
    <dbReference type="NCBI Taxonomy" id="502801"/>
    <lineage>
        <taxon>Bacteria</taxon>
        <taxon>Pseudomonadati</taxon>
        <taxon>Pseudomonadota</taxon>
        <taxon>Gammaproteobacteria</taxon>
        <taxon>Enterobacterales</taxon>
        <taxon>Yersiniaceae</taxon>
        <taxon>Yersinia</taxon>
    </lineage>
</organism>
<keyword id="KW-0143">Chaperone</keyword>
<keyword id="KW-0574">Periplasm</keyword>
<keyword id="KW-0653">Protein transport</keyword>
<keyword id="KW-0732">Signal</keyword>
<keyword id="KW-0813">Transport</keyword>
<sequence length="202" mass="22242">MKRLLVACCFLSGLISASALADASTDLQNRLSKVNSFHASFSQAVTSSDGAVVQEGEGELWVKRPNLFNWHMTSPDESVLISDGETLWFYNPFVEQATATWLKNATGNTPFMLITRNNPDDWKQYNVKQKGDDFELTPKSASGNLKQFAISVTPSGTIKSFTAVEQDGQRSAYTLKSQQSSVVDASKFTFTPPKGVTLDDQR</sequence>